<name>UCRI_TRIEI</name>
<protein>
    <recommendedName>
        <fullName evidence="1">Cytochrome b6-f complex iron-sulfur subunit</fullName>
        <ecNumber evidence="1">7.1.1.6</ecNumber>
    </recommendedName>
    <alternativeName>
        <fullName evidence="1">Plastohydroquinone:plastocyanin oxidoreductase iron-sulfur protein</fullName>
        <shortName evidence="1">ISP</shortName>
        <shortName evidence="1">RISP</shortName>
    </alternativeName>
    <alternativeName>
        <fullName evidence="1">Rieske iron-sulfur protein</fullName>
    </alternativeName>
</protein>
<comment type="function">
    <text evidence="1">Component of the cytochrome b6-f complex, which mediates electron transfer between photosystem II (PSII) and photosystem I (PSI), cyclic electron flow around PSI, and state transitions.</text>
</comment>
<comment type="catalytic activity">
    <reaction evidence="1">
        <text>2 oxidized [plastocyanin] + a plastoquinol + 2 H(+)(in) = 2 reduced [plastocyanin] + a plastoquinone + 4 H(+)(out)</text>
        <dbReference type="Rhea" id="RHEA:22148"/>
        <dbReference type="Rhea" id="RHEA-COMP:9561"/>
        <dbReference type="Rhea" id="RHEA-COMP:9562"/>
        <dbReference type="Rhea" id="RHEA-COMP:10039"/>
        <dbReference type="Rhea" id="RHEA-COMP:10040"/>
        <dbReference type="ChEBI" id="CHEBI:15378"/>
        <dbReference type="ChEBI" id="CHEBI:17757"/>
        <dbReference type="ChEBI" id="CHEBI:29036"/>
        <dbReference type="ChEBI" id="CHEBI:49552"/>
        <dbReference type="ChEBI" id="CHEBI:62192"/>
        <dbReference type="EC" id="7.1.1.6"/>
    </reaction>
</comment>
<comment type="cofactor">
    <cofactor evidence="1">
        <name>[2Fe-2S] cluster</name>
        <dbReference type="ChEBI" id="CHEBI:190135"/>
    </cofactor>
    <text evidence="1">Binds 1 [2Fe-2S] cluster per subunit.</text>
</comment>
<comment type="subunit">
    <text evidence="1">The 4 large subunits of the cytochrome b6-f complex are cytochrome b6, subunit IV (17 kDa polypeptide, PetD), cytochrome f and the Rieske protein, while the 4 small subunits are PetG, PetL, PetM and PetN. The complex functions as a dimer.</text>
</comment>
<comment type="subcellular location">
    <subcellularLocation>
        <location evidence="1">Cellular thylakoid membrane</location>
        <topology evidence="1">Single-pass membrane protein</topology>
    </subcellularLocation>
    <text evidence="1">The transmembrane helix obliquely spans the membrane in one monomer, and its extrinsic C-terminal domain is part of the other monomer.</text>
</comment>
<comment type="miscellaneous">
    <text>The Rieske iron-sulfur protein is a high potential 2Fe-2S protein.</text>
</comment>
<comment type="similarity">
    <text evidence="1">Belongs to the Rieske iron-sulfur protein family.</text>
</comment>
<organism>
    <name type="scientific">Trichodesmium erythraeum (strain IMS101)</name>
    <dbReference type="NCBI Taxonomy" id="203124"/>
    <lineage>
        <taxon>Bacteria</taxon>
        <taxon>Bacillati</taxon>
        <taxon>Cyanobacteriota</taxon>
        <taxon>Cyanophyceae</taxon>
        <taxon>Oscillatoriophycideae</taxon>
        <taxon>Oscillatoriales</taxon>
        <taxon>Microcoleaceae</taxon>
        <taxon>Trichodesmium</taxon>
    </lineage>
</organism>
<gene>
    <name evidence="1" type="primary">petC</name>
    <name type="ordered locus">Tery_1799</name>
</gene>
<feature type="chain" id="PRO_0000298469" description="Cytochrome b6-f complex iron-sulfur subunit">
    <location>
        <begin position="1"/>
        <end position="179"/>
    </location>
</feature>
<feature type="transmembrane region" description="Helical" evidence="1">
    <location>
        <begin position="21"/>
        <end position="43"/>
    </location>
</feature>
<feature type="domain" description="Rieske" evidence="1">
    <location>
        <begin position="61"/>
        <end position="162"/>
    </location>
</feature>
<feature type="binding site" evidence="1">
    <location>
        <position position="108"/>
    </location>
    <ligand>
        <name>[2Fe-2S] cluster</name>
        <dbReference type="ChEBI" id="CHEBI:190135"/>
    </ligand>
</feature>
<feature type="binding site" evidence="1">
    <location>
        <position position="110"/>
    </location>
    <ligand>
        <name>[2Fe-2S] cluster</name>
        <dbReference type="ChEBI" id="CHEBI:190135"/>
    </ligand>
</feature>
<feature type="binding site" evidence="1">
    <location>
        <position position="126"/>
    </location>
    <ligand>
        <name>[2Fe-2S] cluster</name>
        <dbReference type="ChEBI" id="CHEBI:190135"/>
    </ligand>
</feature>
<feature type="binding site" evidence="1">
    <location>
        <position position="129"/>
    </location>
    <ligand>
        <name>[2Fe-2S] cluster</name>
        <dbReference type="ChEBI" id="CHEBI:190135"/>
    </ligand>
</feature>
<feature type="disulfide bond" evidence="1">
    <location>
        <begin position="113"/>
        <end position="128"/>
    </location>
</feature>
<dbReference type="EC" id="7.1.1.6" evidence="1"/>
<dbReference type="EMBL" id="CP000393">
    <property type="protein sequence ID" value="ABG51058.1"/>
    <property type="molecule type" value="Genomic_DNA"/>
</dbReference>
<dbReference type="RefSeq" id="WP_011611433.1">
    <property type="nucleotide sequence ID" value="NC_008312.1"/>
</dbReference>
<dbReference type="SMR" id="Q114L6"/>
<dbReference type="STRING" id="203124.Tery_1799"/>
<dbReference type="KEGG" id="ter:Tery_1799"/>
<dbReference type="eggNOG" id="COG0723">
    <property type="taxonomic scope" value="Bacteria"/>
</dbReference>
<dbReference type="HOGENOM" id="CLU_055690_8_0_3"/>
<dbReference type="OrthoDB" id="9767869at2"/>
<dbReference type="GO" id="GO:0031676">
    <property type="term" value="C:plasma membrane-derived thylakoid membrane"/>
    <property type="evidence" value="ECO:0007669"/>
    <property type="project" value="UniProtKB-SubCell"/>
</dbReference>
<dbReference type="GO" id="GO:0051537">
    <property type="term" value="F:2 iron, 2 sulfur cluster binding"/>
    <property type="evidence" value="ECO:0007669"/>
    <property type="project" value="UniProtKB-KW"/>
</dbReference>
<dbReference type="GO" id="GO:0045158">
    <property type="term" value="F:electron transporter, transferring electrons within cytochrome b6/f complex of photosystem II activity"/>
    <property type="evidence" value="ECO:0007669"/>
    <property type="project" value="UniProtKB-UniRule"/>
</dbReference>
<dbReference type="GO" id="GO:0046872">
    <property type="term" value="F:metal ion binding"/>
    <property type="evidence" value="ECO:0007669"/>
    <property type="project" value="UniProtKB-KW"/>
</dbReference>
<dbReference type="GO" id="GO:0004497">
    <property type="term" value="F:monooxygenase activity"/>
    <property type="evidence" value="ECO:0007669"/>
    <property type="project" value="UniProtKB-ARBA"/>
</dbReference>
<dbReference type="GO" id="GO:0016705">
    <property type="term" value="F:oxidoreductase activity, acting on paired donors, with incorporation or reduction of molecular oxygen"/>
    <property type="evidence" value="ECO:0007669"/>
    <property type="project" value="UniProtKB-ARBA"/>
</dbReference>
<dbReference type="GO" id="GO:0009496">
    <property type="term" value="F:plastoquinol--plastocyanin reductase activity"/>
    <property type="evidence" value="ECO:0007669"/>
    <property type="project" value="UniProtKB-UniRule"/>
</dbReference>
<dbReference type="GO" id="GO:0015979">
    <property type="term" value="P:photosynthesis"/>
    <property type="evidence" value="ECO:0007669"/>
    <property type="project" value="UniProtKB-UniRule"/>
</dbReference>
<dbReference type="CDD" id="cd03471">
    <property type="entry name" value="Rieske_cytochrome_b6f"/>
    <property type="match status" value="1"/>
</dbReference>
<dbReference type="FunFam" id="2.102.10.10:FF:000007">
    <property type="entry name" value="Cytochrome b6-f complex iron-sulfur subunit"/>
    <property type="match status" value="1"/>
</dbReference>
<dbReference type="Gene3D" id="2.102.10.10">
    <property type="entry name" value="Rieske [2Fe-2S] iron-sulphur domain"/>
    <property type="match status" value="1"/>
</dbReference>
<dbReference type="Gene3D" id="1.20.5.700">
    <property type="entry name" value="Single helix bin"/>
    <property type="match status" value="1"/>
</dbReference>
<dbReference type="HAMAP" id="MF_01335">
    <property type="entry name" value="Cytb6_f_Rieske"/>
    <property type="match status" value="1"/>
</dbReference>
<dbReference type="InterPro" id="IPR023960">
    <property type="entry name" value="Cyt_b6_f_Rieske"/>
</dbReference>
<dbReference type="InterPro" id="IPR017941">
    <property type="entry name" value="Rieske_2Fe-2S"/>
</dbReference>
<dbReference type="InterPro" id="IPR036922">
    <property type="entry name" value="Rieske_2Fe-2S_sf"/>
</dbReference>
<dbReference type="InterPro" id="IPR014349">
    <property type="entry name" value="Rieske_Fe-S_prot"/>
</dbReference>
<dbReference type="InterPro" id="IPR005805">
    <property type="entry name" value="Rieske_Fe-S_prot_C"/>
</dbReference>
<dbReference type="NCBIfam" id="NF045928">
    <property type="entry name" value="Cytb6fFeSPetC"/>
    <property type="match status" value="1"/>
</dbReference>
<dbReference type="NCBIfam" id="NF010001">
    <property type="entry name" value="PRK13474.1"/>
    <property type="match status" value="1"/>
</dbReference>
<dbReference type="PANTHER" id="PTHR10134">
    <property type="entry name" value="CYTOCHROME B-C1 COMPLEX SUBUNIT RIESKE, MITOCHONDRIAL"/>
    <property type="match status" value="1"/>
</dbReference>
<dbReference type="Pfam" id="PF00355">
    <property type="entry name" value="Rieske"/>
    <property type="match status" value="1"/>
</dbReference>
<dbReference type="Pfam" id="PF25471">
    <property type="entry name" value="TM_PetC"/>
    <property type="match status" value="1"/>
</dbReference>
<dbReference type="PRINTS" id="PR00162">
    <property type="entry name" value="RIESKE"/>
</dbReference>
<dbReference type="SUPFAM" id="SSF50022">
    <property type="entry name" value="ISP domain"/>
    <property type="match status" value="1"/>
</dbReference>
<dbReference type="PROSITE" id="PS51296">
    <property type="entry name" value="RIESKE"/>
    <property type="match status" value="1"/>
</dbReference>
<keyword id="KW-0001">2Fe-2S</keyword>
<keyword id="KW-1015">Disulfide bond</keyword>
<keyword id="KW-0249">Electron transport</keyword>
<keyword id="KW-0408">Iron</keyword>
<keyword id="KW-0411">Iron-sulfur</keyword>
<keyword id="KW-0472">Membrane</keyword>
<keyword id="KW-0479">Metal-binding</keyword>
<keyword id="KW-0793">Thylakoid</keyword>
<keyword id="KW-1278">Translocase</keyword>
<keyword id="KW-0812">Transmembrane</keyword>
<keyword id="KW-1133">Transmembrane helix</keyword>
<keyword id="KW-0813">Transport</keyword>
<sequence length="179" mass="19116">MAQAEGTPDVPSMGRRQFMNLLTFGTVTGVALGALYPVVNYFIPPSSGGSGGGVTAKDALGNDIIVSEFLANHNSGERTLAQGLKGDPTYVVIEGEQTLAEYGLNAVCTHLGCVVPWNGSENKFICPCHGSQYDNTGKVVRGPAPLSLALVHANVSDDKLVFTQWEETDFRTGEKPWWV</sequence>
<proteinExistence type="inferred from homology"/>
<accession>Q114L6</accession>
<reference key="1">
    <citation type="journal article" date="2015" name="Proc. Natl. Acad. Sci. U.S.A.">
        <title>Trichodesmium genome maintains abundant, widespread noncoding DNA in situ, despite oligotrophic lifestyle.</title>
        <authorList>
            <person name="Walworth N."/>
            <person name="Pfreundt U."/>
            <person name="Nelson W.C."/>
            <person name="Mincer T."/>
            <person name="Heidelberg J.F."/>
            <person name="Fu F."/>
            <person name="Waterbury J.B."/>
            <person name="Glavina del Rio T."/>
            <person name="Goodwin L."/>
            <person name="Kyrpides N.C."/>
            <person name="Land M.L."/>
            <person name="Woyke T."/>
            <person name="Hutchins D.A."/>
            <person name="Hess W.R."/>
            <person name="Webb E.A."/>
        </authorList>
    </citation>
    <scope>NUCLEOTIDE SEQUENCE [LARGE SCALE GENOMIC DNA]</scope>
    <source>
        <strain>IMS101</strain>
    </source>
</reference>
<evidence type="ECO:0000255" key="1">
    <source>
        <dbReference type="HAMAP-Rule" id="MF_01335"/>
    </source>
</evidence>